<protein>
    <recommendedName>
        <fullName evidence="1">Vacuolar membrane protease</fullName>
        <ecNumber evidence="6">3.4.-.-</ecNumber>
    </recommendedName>
    <alternativeName>
        <fullName evidence="1">FXNA-related family protease 1</fullName>
    </alternativeName>
</protein>
<feature type="chain" id="PRO_0000411689" description="Vacuolar membrane protease">
    <location>
        <begin position="1"/>
        <end position="985"/>
    </location>
</feature>
<feature type="topological domain" description="Cytoplasmic" evidence="1">
    <location>
        <begin position="1"/>
        <end position="20"/>
    </location>
</feature>
<feature type="transmembrane region" description="Helical; Name=1" evidence="3">
    <location>
        <begin position="21"/>
        <end position="41"/>
    </location>
</feature>
<feature type="topological domain" description="Vacuolar" evidence="1">
    <location>
        <begin position="42"/>
        <end position="388"/>
    </location>
</feature>
<feature type="transmembrane region" description="Helical; Name=2" evidence="3">
    <location>
        <begin position="389"/>
        <end position="409"/>
    </location>
</feature>
<feature type="topological domain" description="Cytoplasmic" evidence="1">
    <location>
        <begin position="410"/>
        <end position="440"/>
    </location>
</feature>
<feature type="transmembrane region" description="Helical; Name=3" evidence="3">
    <location>
        <begin position="441"/>
        <end position="461"/>
    </location>
</feature>
<feature type="topological domain" description="Vacuolar" evidence="1">
    <location>
        <begin position="462"/>
        <end position="470"/>
    </location>
</feature>
<feature type="transmembrane region" description="Helical; Name=4" evidence="3">
    <location>
        <begin position="471"/>
        <end position="491"/>
    </location>
</feature>
<feature type="topological domain" description="Cytoplasmic" evidence="1">
    <location>
        <begin position="492"/>
        <end position="502"/>
    </location>
</feature>
<feature type="transmembrane region" description="Helical; Name=5" evidence="3">
    <location>
        <begin position="503"/>
        <end position="523"/>
    </location>
</feature>
<feature type="topological domain" description="Vacuolar" evidence="1">
    <location>
        <begin position="524"/>
        <end position="527"/>
    </location>
</feature>
<feature type="transmembrane region" description="Helical; Name=6" evidence="3">
    <location>
        <begin position="528"/>
        <end position="548"/>
    </location>
</feature>
<feature type="topological domain" description="Cytoplasmic" evidence="1">
    <location>
        <begin position="549"/>
        <end position="666"/>
    </location>
</feature>
<feature type="transmembrane region" description="Helical; Name=7" evidence="3">
    <location>
        <begin position="667"/>
        <end position="687"/>
    </location>
</feature>
<feature type="topological domain" description="Vacuolar" evidence="1">
    <location>
        <begin position="688"/>
        <end position="700"/>
    </location>
</feature>
<feature type="transmembrane region" description="Helical; Name=8" evidence="3">
    <location>
        <begin position="701"/>
        <end position="721"/>
    </location>
</feature>
<feature type="topological domain" description="Cytoplasmic" evidence="1">
    <location>
        <begin position="722"/>
        <end position="727"/>
    </location>
</feature>
<feature type="transmembrane region" description="Helical; Name=9" evidence="3">
    <location>
        <begin position="728"/>
        <end position="748"/>
    </location>
</feature>
<feature type="topological domain" description="Vacuolar" evidence="1">
    <location>
        <begin position="749"/>
        <end position="985"/>
    </location>
</feature>
<feature type="region of interest" description="Disordered" evidence="5">
    <location>
        <begin position="563"/>
        <end position="612"/>
    </location>
</feature>
<feature type="compositionally biased region" description="Low complexity" evidence="5">
    <location>
        <begin position="566"/>
        <end position="582"/>
    </location>
</feature>
<feature type="active site" description="Proton acceptor" evidence="2">
    <location>
        <position position="221"/>
    </location>
</feature>
<feature type="binding site" evidence="2">
    <location>
        <position position="175"/>
    </location>
    <ligand>
        <name>Zn(2+)</name>
        <dbReference type="ChEBI" id="CHEBI:29105"/>
        <label>1</label>
        <note>catalytic</note>
    </ligand>
</feature>
<feature type="binding site" evidence="2">
    <location>
        <position position="187"/>
    </location>
    <ligand>
        <name>Zn(2+)</name>
        <dbReference type="ChEBI" id="CHEBI:29105"/>
        <label>1</label>
        <note>catalytic</note>
    </ligand>
</feature>
<feature type="binding site" evidence="2">
    <location>
        <position position="187"/>
    </location>
    <ligand>
        <name>Zn(2+)</name>
        <dbReference type="ChEBI" id="CHEBI:29105"/>
        <label>2</label>
        <note>catalytic</note>
    </ligand>
</feature>
<feature type="binding site" evidence="2">
    <location>
        <position position="222"/>
    </location>
    <ligand>
        <name>Zn(2+)</name>
        <dbReference type="ChEBI" id="CHEBI:29105"/>
        <label>2</label>
        <note>catalytic</note>
    </ligand>
</feature>
<feature type="binding site" evidence="2">
    <location>
        <position position="247"/>
    </location>
    <ligand>
        <name>Zn(2+)</name>
        <dbReference type="ChEBI" id="CHEBI:29105"/>
        <label>1</label>
        <note>catalytic</note>
    </ligand>
</feature>
<feature type="binding site" evidence="2">
    <location>
        <position position="320"/>
    </location>
    <ligand>
        <name>Zn(2+)</name>
        <dbReference type="ChEBI" id="CHEBI:29105"/>
        <label>2</label>
        <note>catalytic</note>
    </ligand>
</feature>
<feature type="site" description="Transition state stabilizer" evidence="2">
    <location>
        <position position="319"/>
    </location>
</feature>
<feature type="glycosylation site" description="N-linked (GlcNAc...) asparagine" evidence="4">
    <location>
        <position position="53"/>
    </location>
</feature>
<feature type="glycosylation site" description="N-linked (GlcNAc...) asparagine" evidence="4">
    <location>
        <position position="116"/>
    </location>
</feature>
<feature type="glycosylation site" description="N-linked (GlcNAc...) asparagine" evidence="4">
    <location>
        <position position="119"/>
    </location>
</feature>
<feature type="glycosylation site" description="N-linked (GlcNAc...) asparagine" evidence="4">
    <location>
        <position position="238"/>
    </location>
</feature>
<feature type="glycosylation site" description="N-linked (GlcNAc...) asparagine" evidence="4">
    <location>
        <position position="767"/>
    </location>
</feature>
<feature type="glycosylation site" description="N-linked (GlcNAc...) asparagine" evidence="4">
    <location>
        <position position="795"/>
    </location>
</feature>
<feature type="glycosylation site" description="N-linked (GlcNAc...) asparagine" evidence="4">
    <location>
        <position position="839"/>
    </location>
</feature>
<comment type="function">
    <text evidence="1">May be involved in vacuolar sorting and osmoregulation.</text>
</comment>
<comment type="cofactor">
    <cofactor evidence="2">
        <name>Zn(2+)</name>
        <dbReference type="ChEBI" id="CHEBI:29105"/>
    </cofactor>
    <text evidence="2">Binds 2 Zn(2+) ions per subunit.</text>
</comment>
<comment type="subcellular location">
    <subcellularLocation>
        <location evidence="1">Vacuole membrane</location>
        <topology evidence="3">Multi-pass membrane protein</topology>
    </subcellularLocation>
</comment>
<comment type="similarity">
    <text evidence="6">Belongs to the peptidase M28 family.</text>
</comment>
<gene>
    <name type="ORF">HCBG_06910</name>
</gene>
<accession>C0NU79</accession>
<sequence length="985" mass="109043">MASSRAQRFNPIAFTPWPVTCITTIVYLALLIPILVINLVVPSAPETNPKGVNLTEAWRDLQHLTGGFHPYNSRRNDEVHEWLLSRINSIIRPTVEAGQRSSATDNLPEVFVFDDNRSNLTYSNGGVGKTSIVGVYFESTNIIVYIRGSEDDLENWWERSNGKPKGKGGVLVNAHYDSVSTGYGATDDGIGVVSLLQLLRYFTTPGNNPRKGLVLLFNNGEEDYLNGAHVFSQHPLSNFTHTFLNLEGAGAGGRAALFRTTDTEVTRFYGNTKHPFGSVLAADGFKMGLLRSQTDYVVFNGILGLRGLDLAFIAPRSRYHTDQDDTRHTSIDSLWHMLSASIGTTEGLVSYTGMDFDGKSKDQNKVNSGAGTLGVWFDMFGTAFAVFRLHTLFAISVALLVIAPLVIFVTNRMYLFSMSKSLEGTGDQVSLRGLRGFSRTPIILVTATTIPICLAYLLEKVNPYIVHSSQFSVWSMMFSAWIFLAWFLACAADFFRPSALHRAYSYTWIFIATWIMLVINTVYANQKGIAAGYFLLFYFAGAFLATWISYLELFALPRKGDFARQTTGRRPSSLSSRLLTSSADELRSNASPSTAEFPGAAGEDTDPTESTSLLRGQRTTFANYRTSGPGGAAEETDEREDINKGGTFEHEQSWSWTLPRWTWVLQLLLLAPIVLILVGQLALFLTASMCQVGSDGVSTFVVYLACAVFTTLLCIPLFPLIHRFTYHIPTFLFLVFIGTLIYNLVAFPFSPANRLKTFFIQEVDLDNGSNTVSLTGIQPYLTDAINSIPSAAGQNITCDKTTPFGKLERCSWSGLSPNVLGQGRERDTEIVPDKWITYNITKTVGKNKARIEISGRNTRACKLKFDRAVANFQVSGSAVDHRMPPTSRQGVAEIRLWSRTWENTWVVDINWHESADESDDDDDDDEKHDAPQNVLSGKAICMWSDANQPGVIPALDEVRLYAPSWIAISKAADGLVEASHSFTIQ</sequence>
<keyword id="KW-0325">Glycoprotein</keyword>
<keyword id="KW-0378">Hydrolase</keyword>
<keyword id="KW-0472">Membrane</keyword>
<keyword id="KW-0479">Metal-binding</keyword>
<keyword id="KW-0482">Metalloprotease</keyword>
<keyword id="KW-0645">Protease</keyword>
<keyword id="KW-1185">Reference proteome</keyword>
<keyword id="KW-0812">Transmembrane</keyword>
<keyword id="KW-1133">Transmembrane helix</keyword>
<keyword id="KW-0926">Vacuole</keyword>
<keyword id="KW-0862">Zinc</keyword>
<dbReference type="EC" id="3.4.-.-" evidence="6"/>
<dbReference type="EMBL" id="GG663372">
    <property type="protein sequence ID" value="EEH04959.1"/>
    <property type="molecule type" value="Genomic_DNA"/>
</dbReference>
<dbReference type="RefSeq" id="XP_045285440.1">
    <property type="nucleotide sequence ID" value="XM_045433959.1"/>
</dbReference>
<dbReference type="SMR" id="C0NU79"/>
<dbReference type="FunCoup" id="C0NU79">
    <property type="interactions" value="5"/>
</dbReference>
<dbReference type="STRING" id="447093.C0NU79"/>
<dbReference type="GeneID" id="69039926"/>
<dbReference type="VEuPathDB" id="FungiDB:I7I50_12251"/>
<dbReference type="HOGENOM" id="CLU_006412_1_0_1"/>
<dbReference type="InParanoid" id="C0NU79"/>
<dbReference type="Proteomes" id="UP000001631">
    <property type="component" value="Unassembled WGS sequence"/>
</dbReference>
<dbReference type="GO" id="GO:0005774">
    <property type="term" value="C:vacuolar membrane"/>
    <property type="evidence" value="ECO:0007669"/>
    <property type="project" value="UniProtKB-SubCell"/>
</dbReference>
<dbReference type="GO" id="GO:0046872">
    <property type="term" value="F:metal ion binding"/>
    <property type="evidence" value="ECO:0007669"/>
    <property type="project" value="UniProtKB-KW"/>
</dbReference>
<dbReference type="GO" id="GO:0008235">
    <property type="term" value="F:metalloexopeptidase activity"/>
    <property type="evidence" value="ECO:0007669"/>
    <property type="project" value="InterPro"/>
</dbReference>
<dbReference type="GO" id="GO:0006508">
    <property type="term" value="P:proteolysis"/>
    <property type="evidence" value="ECO:0007669"/>
    <property type="project" value="UniProtKB-KW"/>
</dbReference>
<dbReference type="CDD" id="cd03875">
    <property type="entry name" value="M28_Fxna_like"/>
    <property type="match status" value="1"/>
</dbReference>
<dbReference type="FunFam" id="3.40.630.10:FF:000057">
    <property type="entry name" value="Vacuolar membrane protease"/>
    <property type="match status" value="1"/>
</dbReference>
<dbReference type="Gene3D" id="3.40.630.10">
    <property type="entry name" value="Zn peptidases"/>
    <property type="match status" value="1"/>
</dbReference>
<dbReference type="InterPro" id="IPR048024">
    <property type="entry name" value="Fxna-like_M28_dom"/>
</dbReference>
<dbReference type="InterPro" id="IPR045175">
    <property type="entry name" value="M28_fam"/>
</dbReference>
<dbReference type="InterPro" id="IPR007484">
    <property type="entry name" value="Peptidase_M28"/>
</dbReference>
<dbReference type="InterPro" id="IPR053975">
    <property type="entry name" value="PFF1_C"/>
</dbReference>
<dbReference type="InterPro" id="IPR053976">
    <property type="entry name" value="PFF1_TM"/>
</dbReference>
<dbReference type="PANTHER" id="PTHR12147">
    <property type="entry name" value="METALLOPEPTIDASE M28 FAMILY MEMBER"/>
    <property type="match status" value="1"/>
</dbReference>
<dbReference type="PANTHER" id="PTHR12147:SF58">
    <property type="entry name" value="VACUOLAR MEMBRANE PROTEASE"/>
    <property type="match status" value="1"/>
</dbReference>
<dbReference type="Pfam" id="PF04389">
    <property type="entry name" value="Peptidase_M28"/>
    <property type="match status" value="1"/>
</dbReference>
<dbReference type="Pfam" id="PF22250">
    <property type="entry name" value="PFF1_C"/>
    <property type="match status" value="1"/>
</dbReference>
<dbReference type="Pfam" id="PF22251">
    <property type="entry name" value="PFF1_TM"/>
    <property type="match status" value="1"/>
</dbReference>
<dbReference type="SUPFAM" id="SSF53187">
    <property type="entry name" value="Zn-dependent exopeptidases"/>
    <property type="match status" value="1"/>
</dbReference>
<organism>
    <name type="scientific">Ajellomyces capsulatus (strain G186AR / H82 / ATCC MYA-2454 / RMSCC 2432)</name>
    <name type="common">Darling's disease fungus</name>
    <name type="synonym">Histoplasma capsulatum</name>
    <dbReference type="NCBI Taxonomy" id="447093"/>
    <lineage>
        <taxon>Eukaryota</taxon>
        <taxon>Fungi</taxon>
        <taxon>Dikarya</taxon>
        <taxon>Ascomycota</taxon>
        <taxon>Pezizomycotina</taxon>
        <taxon>Eurotiomycetes</taxon>
        <taxon>Eurotiomycetidae</taxon>
        <taxon>Onygenales</taxon>
        <taxon>Ajellomycetaceae</taxon>
        <taxon>Histoplasma</taxon>
    </lineage>
</organism>
<proteinExistence type="inferred from homology"/>
<reference key="1">
    <citation type="submission" date="2009-02" db="EMBL/GenBank/DDBJ databases">
        <title>The genome sequence of Ajellomyces capsulatus strain G186AR.</title>
        <authorList>
            <person name="Champion M."/>
            <person name="Cuomo C.A."/>
            <person name="Ma L.-J."/>
            <person name="Henn M.R."/>
            <person name="Sil A."/>
            <person name="Goldman B."/>
            <person name="Young S.K."/>
            <person name="Kodira C.D."/>
            <person name="Zeng Q."/>
            <person name="Koehrsen M."/>
            <person name="Alvarado L."/>
            <person name="Berlin A."/>
            <person name="Borenstein D."/>
            <person name="Chen Z."/>
            <person name="Engels R."/>
            <person name="Freedman E."/>
            <person name="Gellesch M."/>
            <person name="Goldberg J."/>
            <person name="Griggs A."/>
            <person name="Gujja S."/>
            <person name="Heiman D."/>
            <person name="Hepburn T."/>
            <person name="Howarth C."/>
            <person name="Jen D."/>
            <person name="Larson L."/>
            <person name="Lewis B."/>
            <person name="Mehta T."/>
            <person name="Park D."/>
            <person name="Pearson M."/>
            <person name="Roberts A."/>
            <person name="Saif S."/>
            <person name="Shea T."/>
            <person name="Shenoy N."/>
            <person name="Sisk P."/>
            <person name="Stolte C."/>
            <person name="Sykes S."/>
            <person name="Walk T."/>
            <person name="White J."/>
            <person name="Yandava C."/>
            <person name="Klein B."/>
            <person name="McEwen J.G."/>
            <person name="Puccia R."/>
            <person name="Goldman G.H."/>
            <person name="Felipe M.S."/>
            <person name="Nino-Vega G."/>
            <person name="San-Blas G."/>
            <person name="Taylor J."/>
            <person name="Mendoza L."/>
            <person name="Galagan J.E."/>
            <person name="Nusbaum C."/>
            <person name="Birren B.W."/>
        </authorList>
    </citation>
    <scope>NUCLEOTIDE SEQUENCE [LARGE SCALE GENOMIC DNA]</scope>
    <source>
        <strain>G186AR / H82 / ATCC MYA-2454 / RMSCC 2432</strain>
    </source>
</reference>
<evidence type="ECO:0000250" key="1">
    <source>
        <dbReference type="UniProtKB" id="P38244"/>
    </source>
</evidence>
<evidence type="ECO:0000250" key="2">
    <source>
        <dbReference type="UniProtKB" id="P80561"/>
    </source>
</evidence>
<evidence type="ECO:0000255" key="3"/>
<evidence type="ECO:0000255" key="4">
    <source>
        <dbReference type="PROSITE-ProRule" id="PRU00498"/>
    </source>
</evidence>
<evidence type="ECO:0000256" key="5">
    <source>
        <dbReference type="SAM" id="MobiDB-lite"/>
    </source>
</evidence>
<evidence type="ECO:0000305" key="6"/>
<name>PFF1_AJECG</name>